<evidence type="ECO:0000250" key="1"/>
<evidence type="ECO:0000255" key="2">
    <source>
        <dbReference type="PROSITE-ProRule" id="PRU00711"/>
    </source>
</evidence>
<evidence type="ECO:0000269" key="3">
    <source>
    </source>
</evidence>
<keyword id="KW-0004">4Fe-4S</keyword>
<keyword id="KW-0903">Direct protein sequencing</keyword>
<keyword id="KW-0249">Electron transport</keyword>
<keyword id="KW-0408">Iron</keyword>
<keyword id="KW-0411">Iron-sulfur</keyword>
<keyword id="KW-0479">Metal-binding</keyword>
<keyword id="KW-0677">Repeat</keyword>
<keyword id="KW-0813">Transport</keyword>
<organism>
    <name type="scientific">Rhodospirillum rubrum</name>
    <dbReference type="NCBI Taxonomy" id="1085"/>
    <lineage>
        <taxon>Bacteria</taxon>
        <taxon>Pseudomonadati</taxon>
        <taxon>Pseudomonadota</taxon>
        <taxon>Alphaproteobacteria</taxon>
        <taxon>Rhodospirillales</taxon>
        <taxon>Rhodospirillaceae</taxon>
        <taxon>Rhodospirillum</taxon>
    </lineage>
</organism>
<comment type="function">
    <text>The carbon monoxide dehydrogenase (CODH) oxidizes carbon monoxide coupled, via CooF, to the reduction of a hydrogen cation by a hydrogenase (probably CooH). CooF is required in stoichiometric amounts in vitro for anchoring CODH to the membrane as well as for conveying the electrons to the hydrogenase.</text>
</comment>
<accession>P31894</accession>
<feature type="initiator methionine" description="Removed" evidence="3">
    <location>
        <position position="1"/>
    </location>
</feature>
<feature type="chain" id="PRO_0000159241" description="Iron-sulfur protein">
    <location>
        <begin position="2"/>
        <end position="190"/>
    </location>
</feature>
<feature type="domain" description="4Fe-4S ferredoxin-type 1" evidence="2">
    <location>
        <begin position="8"/>
        <end position="36"/>
    </location>
</feature>
<feature type="domain" description="4Fe-4S ferredoxin-type 2" evidence="2">
    <location>
        <begin position="87"/>
        <end position="116"/>
    </location>
</feature>
<feature type="domain" description="4Fe-4S ferredoxin-type 3" evidence="2">
    <location>
        <begin position="133"/>
        <end position="164"/>
    </location>
</feature>
<feature type="binding site" evidence="1">
    <location>
        <position position="17"/>
    </location>
    <ligand>
        <name>[4Fe-4S] cluster</name>
        <dbReference type="ChEBI" id="CHEBI:49883"/>
        <label>1</label>
    </ligand>
</feature>
<feature type="binding site" evidence="1">
    <location>
        <position position="20"/>
    </location>
    <ligand>
        <name>[4Fe-4S] cluster</name>
        <dbReference type="ChEBI" id="CHEBI:49883"/>
        <label>1</label>
    </ligand>
</feature>
<feature type="binding site" evidence="1">
    <location>
        <position position="23"/>
    </location>
    <ligand>
        <name>[4Fe-4S] cluster</name>
        <dbReference type="ChEBI" id="CHEBI:49883"/>
        <label>1</label>
    </ligand>
</feature>
<feature type="binding site" evidence="1">
    <location>
        <position position="27"/>
    </location>
    <ligand>
        <name>[4Fe-4S] cluster</name>
        <dbReference type="ChEBI" id="CHEBI:49883"/>
        <label>2</label>
    </ligand>
</feature>
<feature type="binding site" evidence="1">
    <location>
        <position position="65"/>
    </location>
    <ligand>
        <name>[4Fe-4S] cluster</name>
        <dbReference type="ChEBI" id="CHEBI:49883"/>
        <label>3</label>
    </ligand>
</feature>
<feature type="binding site" evidence="1">
    <location>
        <position position="68"/>
    </location>
    <ligand>
        <name>[4Fe-4S] cluster</name>
        <dbReference type="ChEBI" id="CHEBI:49883"/>
        <label>3</label>
    </ligand>
</feature>
<feature type="binding site" evidence="1">
    <location>
        <position position="73"/>
    </location>
    <ligand>
        <name>[4Fe-4S] cluster</name>
        <dbReference type="ChEBI" id="CHEBI:49883"/>
        <label>3</label>
    </ligand>
</feature>
<feature type="binding site" evidence="1">
    <location>
        <position position="77"/>
    </location>
    <ligand>
        <name>[4Fe-4S] cluster</name>
        <dbReference type="ChEBI" id="CHEBI:49883"/>
        <label>4</label>
    </ligand>
</feature>
<feature type="binding site" evidence="1">
    <location>
        <position position="96"/>
    </location>
    <ligand>
        <name>[4Fe-4S] cluster</name>
        <dbReference type="ChEBI" id="CHEBI:49883"/>
        <label>4</label>
    </ligand>
</feature>
<feature type="binding site" evidence="1">
    <location>
        <position position="99"/>
    </location>
    <ligand>
        <name>[4Fe-4S] cluster</name>
        <dbReference type="ChEBI" id="CHEBI:49883"/>
        <label>4</label>
    </ligand>
</feature>
<feature type="binding site" evidence="1">
    <location>
        <position position="102"/>
    </location>
    <ligand>
        <name>[4Fe-4S] cluster</name>
        <dbReference type="ChEBI" id="CHEBI:49883"/>
        <label>4</label>
    </ligand>
</feature>
<feature type="binding site" evidence="1">
    <location>
        <position position="106"/>
    </location>
    <ligand>
        <name>[4Fe-4S] cluster</name>
        <dbReference type="ChEBI" id="CHEBI:49883"/>
        <label>3</label>
    </ligand>
</feature>
<feature type="binding site" evidence="1">
    <location>
        <position position="133"/>
    </location>
    <ligand>
        <name>[4Fe-4S] cluster</name>
        <dbReference type="ChEBI" id="CHEBI:49883"/>
        <label>2</label>
    </ligand>
</feature>
<feature type="binding site" evidence="1">
    <location>
        <position position="136"/>
    </location>
    <ligand>
        <name>[4Fe-4S] cluster</name>
        <dbReference type="ChEBI" id="CHEBI:49883"/>
        <label>2</label>
    </ligand>
</feature>
<feature type="binding site" evidence="1">
    <location>
        <position position="150"/>
    </location>
    <ligand>
        <name>[4Fe-4S] cluster</name>
        <dbReference type="ChEBI" id="CHEBI:49883"/>
        <label>2</label>
    </ligand>
</feature>
<feature type="binding site" evidence="1">
    <location>
        <position position="154"/>
    </location>
    <ligand>
        <name>[4Fe-4S] cluster</name>
        <dbReference type="ChEBI" id="CHEBI:49883"/>
        <label>1</label>
    </ligand>
</feature>
<sequence length="190" mass="20567">MPPIKENVIIYANPDHCLSCHSCELACAVAHSGGHDMIEAIAANLPLHARNKVVSVDGTAMPMQCRQCEDAPCTFACPTGACRQADGQVQIVEQHCIGCKLCVMVCPFGAITVRSETVVEQGACTNRGVAKKCDLCVDWRASTGKTAPACVEACPTKAIRMVDLDAYRIALREARAREIAKSHRHMRVQF</sequence>
<proteinExistence type="evidence at protein level"/>
<protein>
    <recommendedName>
        <fullName>Iron-sulfur protein</fullName>
    </recommendedName>
</protein>
<name>COOF_RHORU</name>
<gene>
    <name type="primary">cooF</name>
</gene>
<reference key="1">
    <citation type="journal article" date="1992" name="J. Bacteriol.">
        <title>Genetic and physiological characterization of the Rhodospirillum rubrum carbon monoxide dehydrogenase system.</title>
        <authorList>
            <person name="Kerby R.L."/>
            <person name="Hong S.S."/>
            <person name="Ensign S.A."/>
            <person name="Coppoc L.J."/>
            <person name="Ludden P.W."/>
            <person name="Roberts G.P."/>
        </authorList>
    </citation>
    <scope>NUCLEOTIDE SEQUENCE [GENOMIC DNA]</scope>
    <scope>PROTEIN SEQUENCE OF 2-19</scope>
    <source>
        <strain>UR1</strain>
    </source>
</reference>
<dbReference type="EMBL" id="U65510">
    <property type="protein sequence ID" value="AAC45122.1"/>
    <property type="molecule type" value="Genomic_DNA"/>
</dbReference>
<dbReference type="PIR" id="B42957">
    <property type="entry name" value="B42957"/>
</dbReference>
<dbReference type="RefSeq" id="WP_011389180.1">
    <property type="nucleotide sequence ID" value="NZ_NRSC01000060.1"/>
</dbReference>
<dbReference type="SMR" id="P31894"/>
<dbReference type="OMA" id="VRTCPTK"/>
<dbReference type="BioCyc" id="MetaCyc:MONOMER-16455"/>
<dbReference type="GO" id="GO:0051539">
    <property type="term" value="F:4 iron, 4 sulfur cluster binding"/>
    <property type="evidence" value="ECO:0007669"/>
    <property type="project" value="UniProtKB-KW"/>
</dbReference>
<dbReference type="GO" id="GO:0009055">
    <property type="term" value="F:electron transfer activity"/>
    <property type="evidence" value="ECO:0000315"/>
    <property type="project" value="CACAO"/>
</dbReference>
<dbReference type="GO" id="GO:0046872">
    <property type="term" value="F:metal ion binding"/>
    <property type="evidence" value="ECO:0007669"/>
    <property type="project" value="UniProtKB-KW"/>
</dbReference>
<dbReference type="GO" id="GO:0019410">
    <property type="term" value="P:aerobic respiration, using carbon monoxide as electron donor"/>
    <property type="evidence" value="ECO:0000315"/>
    <property type="project" value="CACAO"/>
</dbReference>
<dbReference type="GO" id="GO:0019645">
    <property type="term" value="P:anaerobic electron transport chain"/>
    <property type="evidence" value="ECO:0000315"/>
    <property type="project" value="CACAO"/>
</dbReference>
<dbReference type="CDD" id="cd10554">
    <property type="entry name" value="HycB_like"/>
    <property type="match status" value="1"/>
</dbReference>
<dbReference type="Gene3D" id="3.30.70.20">
    <property type="match status" value="2"/>
</dbReference>
<dbReference type="InterPro" id="IPR017896">
    <property type="entry name" value="4Fe4S_Fe-S-bd"/>
</dbReference>
<dbReference type="InterPro" id="IPR017900">
    <property type="entry name" value="4Fe4S_Fe_S_CS"/>
</dbReference>
<dbReference type="InterPro" id="IPR050954">
    <property type="entry name" value="ET_IronSulfur_Cluster-Binding"/>
</dbReference>
<dbReference type="PANTHER" id="PTHR43177:SF5">
    <property type="entry name" value="ANAEROBIC DIMETHYL SULFOXIDE REDUCTASE CHAIN B-RELATED"/>
    <property type="match status" value="1"/>
</dbReference>
<dbReference type="PANTHER" id="PTHR43177">
    <property type="entry name" value="PROTEIN NRFC"/>
    <property type="match status" value="1"/>
</dbReference>
<dbReference type="Pfam" id="PF13247">
    <property type="entry name" value="Fer4_11"/>
    <property type="match status" value="1"/>
</dbReference>
<dbReference type="SUPFAM" id="SSF54862">
    <property type="entry name" value="4Fe-4S ferredoxins"/>
    <property type="match status" value="1"/>
</dbReference>
<dbReference type="PROSITE" id="PS00198">
    <property type="entry name" value="4FE4S_FER_1"/>
    <property type="match status" value="1"/>
</dbReference>
<dbReference type="PROSITE" id="PS51379">
    <property type="entry name" value="4FE4S_FER_2"/>
    <property type="match status" value="3"/>
</dbReference>